<sequence>MELGGPGAPRLLPPLLLLLGTGLLRASSHVETRAHAEERLLKKLFSGYNKWSRPVANISDVVLVRFGLSIAQLIDVDEKNQMMTTNVWVKQEWHDYKLRWDPADYENVTSIRIPSELIWRPDIVLYNNADGDFAVTHLTKAHLFHDGRVQWTPPAIYKSSCSIDVTFFPFDQQNCTMKFGSWTYDKAKIDLVNMHSRVDQLDFWESGEWVIVDAVGTYNTRKYECCAEIYPDITYAFVIRRLPLFYTINLIIPCLLISCLTVLVFYLPSECGEKITLCISVLLSLTVFLLLITEIIPSTSLVIPLIGEYLLFTMIFVTLSIVITVFVLNVHHRSPRTHTMPTWVRRVFLDIVPRLLLMKRPSVVKDNCRRLIESMHKMASAPRFWPEPEGEPPATSGTQSLHPPSPSFCVPLDVPAEPGPSCKSPSDQLPPQQPLEAEKASPHPSPGPCRPPHGTQAPGLAKARSLSVQHMSSPGEAVEGGVRCRSRSIQYCVPRDDAAPEADGQAAGALASRNTHSAELPPPDQPSPCKCTCKKEPSSVSPSATVKTRSTKAPPPHLPLSPALTRAVEGVQYIADHLKAEDTDFSVKEDWKYVAMVIDRIFLWMFIIVCLLGTVGLFLPPWLAGMI</sequence>
<proteinExistence type="evidence at protein level"/>
<organism>
    <name type="scientific">Homo sapiens</name>
    <name type="common">Human</name>
    <dbReference type="NCBI Taxonomy" id="9606"/>
    <lineage>
        <taxon>Eukaryota</taxon>
        <taxon>Metazoa</taxon>
        <taxon>Chordata</taxon>
        <taxon>Craniata</taxon>
        <taxon>Vertebrata</taxon>
        <taxon>Euteleostomi</taxon>
        <taxon>Mammalia</taxon>
        <taxon>Eutheria</taxon>
        <taxon>Euarchontoglires</taxon>
        <taxon>Primates</taxon>
        <taxon>Haplorrhini</taxon>
        <taxon>Catarrhini</taxon>
        <taxon>Hominidae</taxon>
        <taxon>Homo</taxon>
    </lineage>
</organism>
<name>ACHA4_HUMAN</name>
<keyword id="KW-0002">3D-structure</keyword>
<keyword id="KW-0025">Alternative splicing</keyword>
<keyword id="KW-1003">Cell membrane</keyword>
<keyword id="KW-0225">Disease variant</keyword>
<keyword id="KW-1015">Disulfide bond</keyword>
<keyword id="KW-0887">Epilepsy</keyword>
<keyword id="KW-0325">Glycoprotein</keyword>
<keyword id="KW-0407">Ion channel</keyword>
<keyword id="KW-0406">Ion transport</keyword>
<keyword id="KW-1071">Ligand-gated ion channel</keyword>
<keyword id="KW-0449">Lipoprotein</keyword>
<keyword id="KW-0472">Membrane</keyword>
<keyword id="KW-0564">Palmitate</keyword>
<keyword id="KW-0597">Phosphoprotein</keyword>
<keyword id="KW-1267">Proteomics identification</keyword>
<keyword id="KW-0675">Receptor</keyword>
<keyword id="KW-1185">Reference proteome</keyword>
<keyword id="KW-0732">Signal</keyword>
<keyword id="KW-0770">Synapse</keyword>
<keyword id="KW-0812">Transmembrane</keyword>
<keyword id="KW-1133">Transmembrane helix</keyword>
<keyword id="KW-0813">Transport</keyword>
<evidence type="ECO:0000250" key="1">
    <source>
        <dbReference type="UniProtKB" id="O70174"/>
    </source>
</evidence>
<evidence type="ECO:0000250" key="2">
    <source>
        <dbReference type="UniProtKB" id="P02709"/>
    </source>
</evidence>
<evidence type="ECO:0000250" key="3">
    <source>
        <dbReference type="UniProtKB" id="P04757"/>
    </source>
</evidence>
<evidence type="ECO:0000250" key="4">
    <source>
        <dbReference type="UniProtKB" id="P09483"/>
    </source>
</evidence>
<evidence type="ECO:0000255" key="5"/>
<evidence type="ECO:0000256" key="6">
    <source>
        <dbReference type="SAM" id="MobiDB-lite"/>
    </source>
</evidence>
<evidence type="ECO:0000269" key="7">
    <source>
    </source>
</evidence>
<evidence type="ECO:0000269" key="8">
    <source>
    </source>
</evidence>
<evidence type="ECO:0000269" key="9">
    <source>
    </source>
</evidence>
<evidence type="ECO:0000269" key="10">
    <source>
    </source>
</evidence>
<evidence type="ECO:0000269" key="11">
    <source>
    </source>
</evidence>
<evidence type="ECO:0000269" key="12">
    <source>
    </source>
</evidence>
<evidence type="ECO:0000269" key="13">
    <source>
    </source>
</evidence>
<evidence type="ECO:0000269" key="14">
    <source>
    </source>
</evidence>
<evidence type="ECO:0000269" key="15">
    <source>
    </source>
</evidence>
<evidence type="ECO:0000269" key="16">
    <source>
    </source>
</evidence>
<evidence type="ECO:0000269" key="17">
    <source>
    </source>
</evidence>
<evidence type="ECO:0000269" key="18">
    <source>
    </source>
</evidence>
<evidence type="ECO:0000269" key="19">
    <source>
    </source>
</evidence>
<evidence type="ECO:0000269" key="20">
    <source ref="5"/>
</evidence>
<evidence type="ECO:0000303" key="21">
    <source>
    </source>
</evidence>
<evidence type="ECO:0000305" key="22"/>
<evidence type="ECO:0000312" key="23">
    <source>
        <dbReference type="HGNC" id="HGNC:1958"/>
    </source>
</evidence>
<evidence type="ECO:0007744" key="24">
    <source>
        <dbReference type="PDB" id="2LLY"/>
    </source>
</evidence>
<evidence type="ECO:0007744" key="25">
    <source>
        <dbReference type="PDB" id="5KXI"/>
    </source>
</evidence>
<evidence type="ECO:0007744" key="26">
    <source>
        <dbReference type="PDB" id="6CNJ"/>
    </source>
</evidence>
<evidence type="ECO:0007744" key="27">
    <source>
        <dbReference type="PDB" id="6CNK"/>
    </source>
</evidence>
<evidence type="ECO:0007744" key="28">
    <source>
        <dbReference type="PDB" id="6UR8"/>
    </source>
</evidence>
<evidence type="ECO:0007744" key="29">
    <source>
        <dbReference type="PDB" id="6USF"/>
    </source>
</evidence>
<evidence type="ECO:0007744" key="30">
    <source>
        <dbReference type="PDB" id="8SSZ"/>
    </source>
</evidence>
<evidence type="ECO:0007744" key="31">
    <source>
        <dbReference type="PDB" id="8ST0"/>
    </source>
</evidence>
<evidence type="ECO:0007744" key="32">
    <source>
        <dbReference type="PDB" id="8ST1"/>
    </source>
</evidence>
<evidence type="ECO:0007744" key="33">
    <source>
        <dbReference type="PDB" id="8ST2"/>
    </source>
</evidence>
<evidence type="ECO:0007744" key="34">
    <source>
        <dbReference type="PDB" id="8ST3"/>
    </source>
</evidence>
<evidence type="ECO:0007744" key="35">
    <source>
        <dbReference type="PDB" id="8ST4"/>
    </source>
</evidence>
<evidence type="ECO:0007829" key="36">
    <source>
        <dbReference type="PDB" id="2LLY"/>
    </source>
</evidence>
<evidence type="ECO:0007829" key="37">
    <source>
        <dbReference type="PDB" id="8SSZ"/>
    </source>
</evidence>
<evidence type="ECO:0007829" key="38">
    <source>
        <dbReference type="PDB" id="8ST4"/>
    </source>
</evidence>
<dbReference type="EMBL" id="L35901">
    <property type="protein sequence ID" value="AAA64743.1"/>
    <property type="molecule type" value="mRNA"/>
</dbReference>
<dbReference type="EMBL" id="X89741">
    <property type="protein sequence ID" value="CAA61893.1"/>
    <property type="molecule type" value="Genomic_DNA"/>
</dbReference>
<dbReference type="EMBL" id="X89742">
    <property type="protein sequence ID" value="CAA61893.1"/>
    <property type="status" value="JOINED"/>
    <property type="molecule type" value="Genomic_DNA"/>
</dbReference>
<dbReference type="EMBL" id="X89743">
    <property type="protein sequence ID" value="CAA61893.1"/>
    <property type="status" value="JOINED"/>
    <property type="molecule type" value="Genomic_DNA"/>
</dbReference>
<dbReference type="EMBL" id="X89744">
    <property type="protein sequence ID" value="CAA61893.1"/>
    <property type="status" value="JOINED"/>
    <property type="molecule type" value="Genomic_DNA"/>
</dbReference>
<dbReference type="EMBL" id="X89745">
    <property type="protein sequence ID" value="CAA61893.1"/>
    <property type="status" value="JOINED"/>
    <property type="molecule type" value="Genomic_DNA"/>
</dbReference>
<dbReference type="EMBL" id="X89746">
    <property type="protein sequence ID" value="CAA61893.1"/>
    <property type="status" value="JOINED"/>
    <property type="molecule type" value="Genomic_DNA"/>
</dbReference>
<dbReference type="EMBL" id="U62433">
    <property type="protein sequence ID" value="AAB40111.1"/>
    <property type="molecule type" value="mRNA"/>
</dbReference>
<dbReference type="EMBL" id="Y08421">
    <property type="protein sequence ID" value="CAA69698.1"/>
    <property type="molecule type" value="mRNA"/>
</dbReference>
<dbReference type="EMBL" id="DQ093071">
    <property type="protein sequence ID" value="AAY88737.1"/>
    <property type="molecule type" value="Genomic_DNA"/>
</dbReference>
<dbReference type="EMBL" id="AL121827">
    <property type="status" value="NOT_ANNOTATED_CDS"/>
    <property type="molecule type" value="Genomic_DNA"/>
</dbReference>
<dbReference type="EMBL" id="BC096290">
    <property type="protein sequence ID" value="AAH96290.1"/>
    <property type="molecule type" value="mRNA"/>
</dbReference>
<dbReference type="EMBL" id="BC096291">
    <property type="protein sequence ID" value="AAH96291.1"/>
    <property type="molecule type" value="mRNA"/>
</dbReference>
<dbReference type="EMBL" id="X87629">
    <property type="protein sequence ID" value="CAA60959.1"/>
    <property type="molecule type" value="mRNA"/>
</dbReference>
<dbReference type="CCDS" id="CCDS13517.1">
    <molecule id="P43681-1"/>
</dbReference>
<dbReference type="PIR" id="JC4021">
    <property type="entry name" value="JC4021"/>
</dbReference>
<dbReference type="RefSeq" id="NP_000735.1">
    <molecule id="P43681-1"/>
    <property type="nucleotide sequence ID" value="NM_000744.7"/>
</dbReference>
<dbReference type="RefSeq" id="NP_001243502.1">
    <property type="nucleotide sequence ID" value="NM_001256573.1"/>
</dbReference>
<dbReference type="RefSeq" id="XP_011526826.1">
    <property type="nucleotide sequence ID" value="XM_011528524.1"/>
</dbReference>
<dbReference type="PDB" id="2LLY">
    <property type="method" value="NMR"/>
    <property type="chains" value="A=240-339, A=598-626"/>
</dbReference>
<dbReference type="PDB" id="5KXI">
    <property type="method" value="X-ray"/>
    <property type="resolution" value="3.94 A"/>
    <property type="chains" value="A/D=27-364, A/D=586-627"/>
</dbReference>
<dbReference type="PDB" id="6CNJ">
    <property type="method" value="EM"/>
    <property type="resolution" value="3.40 A"/>
    <property type="chains" value="A/D=27-364"/>
</dbReference>
<dbReference type="PDB" id="6CNK">
    <property type="method" value="EM"/>
    <property type="resolution" value="3.70 A"/>
    <property type="chains" value="A/B/D=27-364"/>
</dbReference>
<dbReference type="PDB" id="6UR8">
    <property type="method" value="EM"/>
    <property type="resolution" value="3.71 A"/>
    <property type="chains" value="A/D=27-364, A/D=589-627"/>
</dbReference>
<dbReference type="PDB" id="6USF">
    <property type="method" value="EM"/>
    <property type="resolution" value="3.87 A"/>
    <property type="chains" value="A/D=27-358, A/D=589-627"/>
</dbReference>
<dbReference type="PDB" id="8SSZ">
    <property type="method" value="EM"/>
    <property type="resolution" value="2.64 A"/>
    <property type="chains" value="A/D=27-627"/>
</dbReference>
<dbReference type="PDB" id="8ST0">
    <property type="method" value="EM"/>
    <property type="resolution" value="2.40 A"/>
    <property type="chains" value="A/D=27-627"/>
</dbReference>
<dbReference type="PDB" id="8ST1">
    <property type="method" value="EM"/>
    <property type="resolution" value="3.41 A"/>
    <property type="chains" value="A/B/D=27-364"/>
</dbReference>
<dbReference type="PDB" id="8ST2">
    <property type="method" value="EM"/>
    <property type="resolution" value="2.94 A"/>
    <property type="chains" value="A/B/D=27-364"/>
</dbReference>
<dbReference type="PDB" id="8ST3">
    <property type="method" value="EM"/>
    <property type="resolution" value="2.93 A"/>
    <property type="chains" value="A/D=27-364"/>
</dbReference>
<dbReference type="PDB" id="8ST4">
    <property type="method" value="EM"/>
    <property type="resolution" value="2.35 A"/>
    <property type="chains" value="A/D=27-364"/>
</dbReference>
<dbReference type="PDBsum" id="2LLY"/>
<dbReference type="PDBsum" id="5KXI"/>
<dbReference type="PDBsum" id="6CNJ"/>
<dbReference type="PDBsum" id="6CNK"/>
<dbReference type="PDBsum" id="6UR8"/>
<dbReference type="PDBsum" id="6USF"/>
<dbReference type="PDBsum" id="8SSZ"/>
<dbReference type="PDBsum" id="8ST0"/>
<dbReference type="PDBsum" id="8ST1"/>
<dbReference type="PDBsum" id="8ST2"/>
<dbReference type="PDBsum" id="8ST3"/>
<dbReference type="PDBsum" id="8ST4"/>
<dbReference type="EMDB" id="EMD-20857"/>
<dbReference type="EMDB" id="EMD-20863"/>
<dbReference type="EMDB" id="EMD-40752"/>
<dbReference type="EMDB" id="EMD-40753"/>
<dbReference type="EMDB" id="EMD-40754"/>
<dbReference type="EMDB" id="EMD-40755"/>
<dbReference type="EMDB" id="EMD-40756"/>
<dbReference type="EMDB" id="EMD-40757"/>
<dbReference type="EMDB" id="EMD-7535"/>
<dbReference type="EMDB" id="EMD-7536"/>
<dbReference type="SMR" id="P43681"/>
<dbReference type="BioGRID" id="107559">
    <property type="interactions" value="179"/>
</dbReference>
<dbReference type="ComplexPortal" id="CPX-168">
    <property type="entry name" value="Neuronal nicotinic acetylcholine receptor complex, 3xalpha4-2xbeta2"/>
</dbReference>
<dbReference type="ComplexPortal" id="CPX-218">
    <property type="entry name" value="Neuronal nicotinic acetylcholine receptor complex, alpha4-alpha5-beta2"/>
</dbReference>
<dbReference type="ComplexPortal" id="CPX-2180">
    <property type="entry name" value="Neuronal nicotinic acetylcholine receptor complex, 2xalpha4-3xbeta2"/>
</dbReference>
<dbReference type="ComplexPortal" id="CPX-2203">
    <property type="entry name" value="Neuronal nicotinic acetylcholine receptor complex, alpha4-beta4"/>
</dbReference>
<dbReference type="CORUM" id="P43681"/>
<dbReference type="FunCoup" id="P43681">
    <property type="interactions" value="651"/>
</dbReference>
<dbReference type="IntAct" id="P43681">
    <property type="interactions" value="154"/>
</dbReference>
<dbReference type="MINT" id="P43681"/>
<dbReference type="STRING" id="9606.ENSP00000359285"/>
<dbReference type="BindingDB" id="P43681"/>
<dbReference type="ChEMBL" id="CHEMBL1882"/>
<dbReference type="DrugBank" id="DB00915">
    <property type="generic name" value="Amantadine"/>
</dbReference>
<dbReference type="DrugBank" id="DB01351">
    <property type="generic name" value="Amobarbital"/>
</dbReference>
<dbReference type="DrugBank" id="DB01352">
    <property type="generic name" value="Aprobarbital"/>
</dbReference>
<dbReference type="DrugBank" id="DB00572">
    <property type="generic name" value="Atropine"/>
</dbReference>
<dbReference type="DrugBank" id="DB01483">
    <property type="generic name" value="Barbital"/>
</dbReference>
<dbReference type="DrugBank" id="DB00237">
    <property type="generic name" value="Butabarbital"/>
</dbReference>
<dbReference type="DrugBank" id="DB00241">
    <property type="generic name" value="Butalbital"/>
</dbReference>
<dbReference type="DrugBank" id="DB01353">
    <property type="generic name" value="Butobarbital"/>
</dbReference>
<dbReference type="DrugBank" id="DB00564">
    <property type="generic name" value="Carbamazepine"/>
</dbReference>
<dbReference type="DrugBank" id="DB00565">
    <property type="generic name" value="Cisatracurium"/>
</dbReference>
<dbReference type="DrugBank" id="DB12244">
    <property type="generic name" value="CP-601927"/>
</dbReference>
<dbReference type="DrugBank" id="DB09028">
    <property type="generic name" value="Cytisine"/>
</dbReference>
<dbReference type="DrugBank" id="DB01245">
    <property type="generic name" value="Decamethonium"/>
</dbReference>
<dbReference type="DrugBank" id="DB00514">
    <property type="generic name" value="Dextromethorphan"/>
</dbReference>
<dbReference type="DrugBank" id="DB12125">
    <property type="generic name" value="Dianicline"/>
</dbReference>
<dbReference type="DrugBank" id="DB01496">
    <property type="generic name" value="Dihydro-2-thioxo-5-((5-(2-(trifluoromethyl)phenyl)-2-furanyl)methyl)-4,6(1H,5H)-pyrimidinedione"/>
</dbReference>
<dbReference type="DrugBank" id="DB07720">
    <property type="generic name" value="Epibatidine"/>
</dbReference>
<dbReference type="DrugBank" id="DB00783">
    <property type="generic name" value="Estradiol"/>
</dbReference>
<dbReference type="DrugBank" id="DB13952">
    <property type="generic name" value="Estradiol acetate"/>
</dbReference>
<dbReference type="DrugBank" id="DB13953">
    <property type="generic name" value="Estradiol benzoate"/>
</dbReference>
<dbReference type="DrugBank" id="DB13954">
    <property type="generic name" value="Estradiol cypionate"/>
</dbReference>
<dbReference type="DrugBank" id="DB13955">
    <property type="generic name" value="Estradiol dienanthate"/>
</dbReference>
<dbReference type="DrugBank" id="DB13956">
    <property type="generic name" value="Estradiol valerate"/>
</dbReference>
<dbReference type="DrugBank" id="DB00898">
    <property type="generic name" value="Ethanol"/>
</dbReference>
<dbReference type="DrugBank" id="DB01354">
    <property type="generic name" value="Heptabarbital"/>
</dbReference>
<dbReference type="DrugBank" id="DB01355">
    <property type="generic name" value="Hexobarbital"/>
</dbReference>
<dbReference type="DrugBank" id="DB00753">
    <property type="generic name" value="Isoflurane"/>
</dbReference>
<dbReference type="DrugBank" id="DB16205">
    <property type="generic name" value="Ispronicline"/>
</dbReference>
<dbReference type="DrugBank" id="DB00657">
    <property type="generic name" value="Mecamylamine"/>
</dbReference>
<dbReference type="DrugBank" id="DB00333">
    <property type="generic name" value="Methadone"/>
</dbReference>
<dbReference type="DrugBank" id="DB00463">
    <property type="generic name" value="Metharbital"/>
</dbReference>
<dbReference type="DrugBank" id="DB00849">
    <property type="generic name" value="Methylphenobarbital"/>
</dbReference>
<dbReference type="DrugBank" id="DB00416">
    <property type="generic name" value="Metocurine iodide"/>
</dbReference>
<dbReference type="DrugBank" id="DB00184">
    <property type="generic name" value="Nicotine"/>
</dbReference>
<dbReference type="DrugBank" id="DB00312">
    <property type="generic name" value="Pentobarbital"/>
</dbReference>
<dbReference type="DrugBank" id="DB01090">
    <property type="generic name" value="Pentolinium"/>
</dbReference>
<dbReference type="DrugBank" id="DB01174">
    <property type="generic name" value="Phenobarbital"/>
</dbReference>
<dbReference type="DrugBank" id="DB00981">
    <property type="generic name" value="Physostigmine"/>
</dbReference>
<dbReference type="DrugBank" id="DB05458">
    <property type="generic name" value="Pozanicline"/>
</dbReference>
<dbReference type="DrugBank" id="DB00794">
    <property type="generic name" value="Primidone"/>
</dbReference>
<dbReference type="DrugBank" id="DB05740">
    <property type="generic name" value="RPI-78M"/>
</dbReference>
<dbReference type="DrugBank" id="DB00747">
    <property type="generic name" value="Scopolamine"/>
</dbReference>
<dbReference type="DrugBank" id="DB00418">
    <property type="generic name" value="Secobarbital"/>
</dbReference>
<dbReference type="DrugBank" id="DB12527">
    <property type="generic name" value="Sofinicline"/>
</dbReference>
<dbReference type="DrugBank" id="DB00202">
    <property type="generic name" value="Succinylcholine"/>
</dbReference>
<dbReference type="DrugBank" id="DB00306">
    <property type="generic name" value="Talbutal"/>
</dbReference>
<dbReference type="DrugBank" id="DB06044">
    <property type="generic name" value="TC-2216"/>
</dbReference>
<dbReference type="DrugBank" id="DB00599">
    <property type="generic name" value="Thiopental"/>
</dbReference>
<dbReference type="DrugBank" id="DB01116">
    <property type="generic name" value="Trimethaphan"/>
</dbReference>
<dbReference type="DrugBank" id="DB01273">
    <property type="generic name" value="Varenicline"/>
</dbReference>
<dbReference type="DrugCentral" id="P43681"/>
<dbReference type="GuidetoPHARMACOLOGY" id="465"/>
<dbReference type="TCDB" id="1.A.9.1.6">
    <property type="family name" value="the neurotransmitter receptor, cys loop, ligand-gated ion channel (lic) family"/>
</dbReference>
<dbReference type="GlyCosmos" id="P43681">
    <property type="glycosylation" value="3 sites, No reported glycans"/>
</dbReference>
<dbReference type="GlyGen" id="P43681">
    <property type="glycosylation" value="3 sites, 1 N-linked glycan (1 site)"/>
</dbReference>
<dbReference type="iPTMnet" id="P43681"/>
<dbReference type="PhosphoSitePlus" id="P43681"/>
<dbReference type="SwissPalm" id="P43681"/>
<dbReference type="BioMuta" id="CHRNA4"/>
<dbReference type="DMDM" id="1351848"/>
<dbReference type="MassIVE" id="P43681"/>
<dbReference type="PaxDb" id="9606-ENSP00000359285"/>
<dbReference type="PeptideAtlas" id="P43681"/>
<dbReference type="ProteomicsDB" id="55649">
    <molecule id="P43681-1"/>
</dbReference>
<dbReference type="ProteomicsDB" id="62290"/>
<dbReference type="Antibodypedia" id="29717">
    <property type="antibodies" value="287 antibodies from 33 providers"/>
</dbReference>
<dbReference type="DNASU" id="1137"/>
<dbReference type="Ensembl" id="ENST00000370263.9">
    <molecule id="P43681-1"/>
    <property type="protein sequence ID" value="ENSP00000359285.4"/>
    <property type="gene ID" value="ENSG00000101204.18"/>
</dbReference>
<dbReference type="GeneID" id="1137"/>
<dbReference type="KEGG" id="hsa:1137"/>
<dbReference type="MANE-Select" id="ENST00000370263.9">
    <property type="protein sequence ID" value="ENSP00000359285.4"/>
    <property type="RefSeq nucleotide sequence ID" value="NM_000744.7"/>
    <property type="RefSeq protein sequence ID" value="NP_000735.1"/>
</dbReference>
<dbReference type="UCSC" id="uc002yes.4">
    <molecule id="P43681-1"/>
    <property type="organism name" value="human"/>
</dbReference>
<dbReference type="AGR" id="HGNC:1958"/>
<dbReference type="CTD" id="1137"/>
<dbReference type="DisGeNET" id="1137"/>
<dbReference type="GeneCards" id="CHRNA4"/>
<dbReference type="GeneReviews" id="CHRNA4"/>
<dbReference type="HGNC" id="HGNC:1958">
    <property type="gene designation" value="CHRNA4"/>
</dbReference>
<dbReference type="HPA" id="ENSG00000101204">
    <property type="expression patterns" value="Tissue enhanced (brain, liver, parathyroid gland)"/>
</dbReference>
<dbReference type="MalaCards" id="CHRNA4"/>
<dbReference type="MIM" id="118504">
    <property type="type" value="gene"/>
</dbReference>
<dbReference type="MIM" id="600513">
    <property type="type" value="phenotype"/>
</dbReference>
<dbReference type="neXtProt" id="NX_P43681"/>
<dbReference type="OpenTargets" id="ENSG00000101204"/>
<dbReference type="Orphanet" id="98784">
    <property type="disease" value="Sleep-related hypermotor epilepsy"/>
</dbReference>
<dbReference type="PharmGKB" id="PA26490"/>
<dbReference type="VEuPathDB" id="HostDB:ENSG00000101204"/>
<dbReference type="eggNOG" id="KOG3645">
    <property type="taxonomic scope" value="Eukaryota"/>
</dbReference>
<dbReference type="GeneTree" id="ENSGT00940000159329"/>
<dbReference type="HOGENOM" id="CLU_018074_1_1_1"/>
<dbReference type="InParanoid" id="P43681"/>
<dbReference type="OMA" id="FLVKEDW"/>
<dbReference type="OrthoDB" id="5975154at2759"/>
<dbReference type="PAN-GO" id="P43681">
    <property type="GO annotations" value="10 GO annotations based on evolutionary models"/>
</dbReference>
<dbReference type="PhylomeDB" id="P43681"/>
<dbReference type="TreeFam" id="TF315605"/>
<dbReference type="PathwayCommons" id="P43681"/>
<dbReference type="Reactome" id="R-HSA-629587">
    <property type="pathway name" value="Highly sodium permeable postsynaptic acetylcholine nicotinic receptors"/>
</dbReference>
<dbReference type="Reactome" id="R-HSA-629594">
    <property type="pathway name" value="Highly calcium permeable postsynaptic nicotinic acetylcholine receptors"/>
</dbReference>
<dbReference type="Reactome" id="R-HSA-629597">
    <property type="pathway name" value="Highly calcium permeable nicotinic acetylcholine receptors"/>
</dbReference>
<dbReference type="SignaLink" id="P43681"/>
<dbReference type="BioGRID-ORCS" id="1137">
    <property type="hits" value="13 hits in 1162 CRISPR screens"/>
</dbReference>
<dbReference type="EvolutionaryTrace" id="P43681"/>
<dbReference type="GeneWiki" id="CHRNA4"/>
<dbReference type="GenomeRNAi" id="1137"/>
<dbReference type="Pharos" id="P43681">
    <property type="development level" value="Tclin"/>
</dbReference>
<dbReference type="PRO" id="PR:P43681"/>
<dbReference type="Proteomes" id="UP000005640">
    <property type="component" value="Chromosome 20"/>
</dbReference>
<dbReference type="RNAct" id="P43681">
    <property type="molecule type" value="protein"/>
</dbReference>
<dbReference type="Bgee" id="ENSG00000101204">
    <property type="expression patterns" value="Expressed in right lobe of liver and 111 other cell types or tissues"/>
</dbReference>
<dbReference type="ExpressionAtlas" id="P43681">
    <property type="expression patterns" value="baseline and differential"/>
</dbReference>
<dbReference type="GO" id="GO:0005892">
    <property type="term" value="C:acetylcholine-gated channel complex"/>
    <property type="evidence" value="ECO:0000314"/>
    <property type="project" value="UniProtKB"/>
</dbReference>
<dbReference type="GO" id="GO:0034703">
    <property type="term" value="C:cation channel complex"/>
    <property type="evidence" value="ECO:0000314"/>
    <property type="project" value="UniProt"/>
</dbReference>
<dbReference type="GO" id="GO:0030425">
    <property type="term" value="C:dendrite"/>
    <property type="evidence" value="ECO:0000250"/>
    <property type="project" value="UniProtKB"/>
</dbReference>
<dbReference type="GO" id="GO:0009897">
    <property type="term" value="C:external side of plasma membrane"/>
    <property type="evidence" value="ECO:0000250"/>
    <property type="project" value="UniProtKB"/>
</dbReference>
<dbReference type="GO" id="GO:0016020">
    <property type="term" value="C:membrane"/>
    <property type="evidence" value="ECO:0000250"/>
    <property type="project" value="UniProtKB"/>
</dbReference>
<dbReference type="GO" id="GO:0043005">
    <property type="term" value="C:neuron projection"/>
    <property type="evidence" value="ECO:0000318"/>
    <property type="project" value="GO_Central"/>
</dbReference>
<dbReference type="GO" id="GO:0043025">
    <property type="term" value="C:neuronal cell body"/>
    <property type="evidence" value="ECO:0000250"/>
    <property type="project" value="UniProtKB"/>
</dbReference>
<dbReference type="GO" id="GO:0098878">
    <property type="term" value="C:neurotransmitter receptor complex"/>
    <property type="evidence" value="ECO:0000314"/>
    <property type="project" value="UniProt"/>
</dbReference>
<dbReference type="GO" id="GO:0005886">
    <property type="term" value="C:plasma membrane"/>
    <property type="evidence" value="ECO:0000250"/>
    <property type="project" value="UniProtKB"/>
</dbReference>
<dbReference type="GO" id="GO:0045211">
    <property type="term" value="C:postsynaptic membrane"/>
    <property type="evidence" value="ECO:0007669"/>
    <property type="project" value="UniProtKB-KW"/>
</dbReference>
<dbReference type="GO" id="GO:0042734">
    <property type="term" value="C:presynaptic membrane"/>
    <property type="evidence" value="ECO:0000250"/>
    <property type="project" value="UniProtKB"/>
</dbReference>
<dbReference type="GO" id="GO:0045202">
    <property type="term" value="C:synapse"/>
    <property type="evidence" value="ECO:0000318"/>
    <property type="project" value="GO_Central"/>
</dbReference>
<dbReference type="GO" id="GO:0042166">
    <property type="term" value="F:acetylcholine binding"/>
    <property type="evidence" value="ECO:0000305"/>
    <property type="project" value="UniProtKB"/>
</dbReference>
<dbReference type="GO" id="GO:0015464">
    <property type="term" value="F:acetylcholine receptor activity"/>
    <property type="evidence" value="ECO:0000314"/>
    <property type="project" value="UniProtKB"/>
</dbReference>
<dbReference type="GO" id="GO:0022848">
    <property type="term" value="F:acetylcholine-gated monoatomic cation-selective channel activity"/>
    <property type="evidence" value="ECO:0000314"/>
    <property type="project" value="UniProtKB"/>
</dbReference>
<dbReference type="GO" id="GO:0015276">
    <property type="term" value="F:ligand-gated monoatomic ion channel activity"/>
    <property type="evidence" value="ECO:0000304"/>
    <property type="project" value="DFLAT"/>
</dbReference>
<dbReference type="GO" id="GO:0095500">
    <property type="term" value="P:acetylcholine receptor signaling pathway"/>
    <property type="evidence" value="ECO:0000314"/>
    <property type="project" value="UniProtKB"/>
</dbReference>
<dbReference type="GO" id="GO:0001508">
    <property type="term" value="P:action potential"/>
    <property type="evidence" value="ECO:0000250"/>
    <property type="project" value="UniProtKB"/>
</dbReference>
<dbReference type="GO" id="GO:0042113">
    <property type="term" value="P:B cell activation"/>
    <property type="evidence" value="ECO:0000250"/>
    <property type="project" value="UniProtKB"/>
</dbReference>
<dbReference type="GO" id="GO:0035095">
    <property type="term" value="P:behavioral response to nicotine"/>
    <property type="evidence" value="ECO:0000315"/>
    <property type="project" value="UniProtKB"/>
</dbReference>
<dbReference type="GO" id="GO:0006816">
    <property type="term" value="P:calcium ion transport"/>
    <property type="evidence" value="ECO:0000250"/>
    <property type="project" value="UniProtKB"/>
</dbReference>
<dbReference type="GO" id="GO:0007268">
    <property type="term" value="P:chemical synaptic transmission"/>
    <property type="evidence" value="ECO:0000303"/>
    <property type="project" value="UniProtKB"/>
</dbReference>
<dbReference type="GO" id="GO:0050890">
    <property type="term" value="P:cognition"/>
    <property type="evidence" value="ECO:0000315"/>
    <property type="project" value="UniProtKB"/>
</dbReference>
<dbReference type="GO" id="GO:0006281">
    <property type="term" value="P:DNA repair"/>
    <property type="evidence" value="ECO:0000315"/>
    <property type="project" value="UniProtKB"/>
</dbReference>
<dbReference type="GO" id="GO:0060080">
    <property type="term" value="P:inhibitory postsynaptic potential"/>
    <property type="evidence" value="ECO:0000250"/>
    <property type="project" value="UniProtKB"/>
</dbReference>
<dbReference type="GO" id="GO:0051899">
    <property type="term" value="P:membrane depolarization"/>
    <property type="evidence" value="ECO:0000250"/>
    <property type="project" value="UniProtKB"/>
</dbReference>
<dbReference type="GO" id="GO:0034220">
    <property type="term" value="P:monoatomic ion transmembrane transport"/>
    <property type="evidence" value="ECO:0000318"/>
    <property type="project" value="GO_Central"/>
</dbReference>
<dbReference type="GO" id="GO:0006811">
    <property type="term" value="P:monoatomic ion transport"/>
    <property type="evidence" value="ECO:0000303"/>
    <property type="project" value="UniProtKB"/>
</dbReference>
<dbReference type="GO" id="GO:0050877">
    <property type="term" value="P:nervous system process"/>
    <property type="evidence" value="ECO:0000315"/>
    <property type="project" value="UniProtKB"/>
</dbReference>
<dbReference type="GO" id="GO:0007274">
    <property type="term" value="P:neuromuscular synaptic transmission"/>
    <property type="evidence" value="ECO:0000318"/>
    <property type="project" value="GO_Central"/>
</dbReference>
<dbReference type="GO" id="GO:0014059">
    <property type="term" value="P:regulation of dopamine secretion"/>
    <property type="evidence" value="ECO:0000250"/>
    <property type="project" value="UniProtKB"/>
</dbReference>
<dbReference type="GO" id="GO:0042391">
    <property type="term" value="P:regulation of membrane potential"/>
    <property type="evidence" value="ECO:0000250"/>
    <property type="project" value="UniProtKB"/>
</dbReference>
<dbReference type="GO" id="GO:0001666">
    <property type="term" value="P:response to hypoxia"/>
    <property type="evidence" value="ECO:0000314"/>
    <property type="project" value="UniProtKB"/>
</dbReference>
<dbReference type="GO" id="GO:0035094">
    <property type="term" value="P:response to nicotine"/>
    <property type="evidence" value="ECO:0000314"/>
    <property type="project" value="UniProtKB"/>
</dbReference>
<dbReference type="GO" id="GO:0006979">
    <property type="term" value="P:response to oxidative stress"/>
    <property type="evidence" value="ECO:0000315"/>
    <property type="project" value="UniProtKB"/>
</dbReference>
<dbReference type="GO" id="GO:0019233">
    <property type="term" value="P:sensory perception of pain"/>
    <property type="evidence" value="ECO:0000250"/>
    <property type="project" value="UniProtKB"/>
</dbReference>
<dbReference type="GO" id="GO:0007165">
    <property type="term" value="P:signal transduction"/>
    <property type="evidence" value="ECO:0000314"/>
    <property type="project" value="UniProtKB"/>
</dbReference>
<dbReference type="GO" id="GO:0007271">
    <property type="term" value="P:synaptic transmission, cholinergic"/>
    <property type="evidence" value="ECO:0000314"/>
    <property type="project" value="UniProtKB"/>
</dbReference>
<dbReference type="CDD" id="cd19064">
    <property type="entry name" value="LGIC_TM_nAChR"/>
    <property type="match status" value="1"/>
</dbReference>
<dbReference type="FunFam" id="1.20.58.390:FF:000014">
    <property type="entry name" value="Neuronal nicotinic acetylcholine receptor alpha4 subunit"/>
    <property type="match status" value="1"/>
</dbReference>
<dbReference type="FunFam" id="2.70.170.10:FF:000005">
    <property type="entry name" value="Neuronal nicotinic acetylcholine receptor alpha4 subunit"/>
    <property type="match status" value="1"/>
</dbReference>
<dbReference type="FunFam" id="1.20.58.390:FF:000001">
    <property type="entry name" value="Neuronal nicotinic acetylcholine receptor subunit 3"/>
    <property type="match status" value="1"/>
</dbReference>
<dbReference type="Gene3D" id="2.70.170.10">
    <property type="entry name" value="Neurotransmitter-gated ion-channel ligand-binding domain"/>
    <property type="match status" value="1"/>
</dbReference>
<dbReference type="Gene3D" id="1.20.58.390">
    <property type="entry name" value="Neurotransmitter-gated ion-channel transmembrane domain"/>
    <property type="match status" value="2"/>
</dbReference>
<dbReference type="InterPro" id="IPR006202">
    <property type="entry name" value="Neur_chan_lig-bd"/>
</dbReference>
<dbReference type="InterPro" id="IPR036734">
    <property type="entry name" value="Neur_chan_lig-bd_sf"/>
</dbReference>
<dbReference type="InterPro" id="IPR006201">
    <property type="entry name" value="Neur_channel"/>
</dbReference>
<dbReference type="InterPro" id="IPR036719">
    <property type="entry name" value="Neuro-gated_channel_TM_sf"/>
</dbReference>
<dbReference type="InterPro" id="IPR038050">
    <property type="entry name" value="Neuro_actylchol_rec"/>
</dbReference>
<dbReference type="InterPro" id="IPR006029">
    <property type="entry name" value="Neurotrans-gated_channel_TM"/>
</dbReference>
<dbReference type="InterPro" id="IPR018000">
    <property type="entry name" value="Neurotransmitter_ion_chnl_CS"/>
</dbReference>
<dbReference type="InterPro" id="IPR002394">
    <property type="entry name" value="Nicotinic_acetylcholine_rcpt"/>
</dbReference>
<dbReference type="NCBIfam" id="TIGR00860">
    <property type="entry name" value="LIC"/>
    <property type="match status" value="1"/>
</dbReference>
<dbReference type="PANTHER" id="PTHR18945">
    <property type="entry name" value="NEUROTRANSMITTER GATED ION CHANNEL"/>
    <property type="match status" value="1"/>
</dbReference>
<dbReference type="Pfam" id="PF02931">
    <property type="entry name" value="Neur_chan_LBD"/>
    <property type="match status" value="1"/>
</dbReference>
<dbReference type="Pfam" id="PF02932">
    <property type="entry name" value="Neur_chan_memb"/>
    <property type="match status" value="1"/>
</dbReference>
<dbReference type="PRINTS" id="PR00254">
    <property type="entry name" value="NICOTINICR"/>
</dbReference>
<dbReference type="PRINTS" id="PR00252">
    <property type="entry name" value="NRIONCHANNEL"/>
</dbReference>
<dbReference type="SUPFAM" id="SSF90112">
    <property type="entry name" value="Neurotransmitter-gated ion-channel transmembrane pore"/>
    <property type="match status" value="1"/>
</dbReference>
<dbReference type="SUPFAM" id="SSF63712">
    <property type="entry name" value="Nicotinic receptor ligand binding domain-like"/>
    <property type="match status" value="1"/>
</dbReference>
<dbReference type="PROSITE" id="PS00236">
    <property type="entry name" value="NEUROTR_ION_CHANNEL"/>
    <property type="match status" value="1"/>
</dbReference>
<protein>
    <recommendedName>
        <fullName>Neuronal acetylcholine receptor subunit alpha-4</fullName>
    </recommendedName>
</protein>
<gene>
    <name evidence="23" type="primary">CHRNA4</name>
    <name type="synonym">NACRA4</name>
</gene>
<comment type="function">
    <text evidence="1 11 14 16 17 18">Component of neuronal acetylcholine receptors (nAChRs) that function as pentameric, ligand-gated cation channels with high calcium permeability among other activities. nAChRs are excitatory neurotrasnmitter receptors formed by a collection of nAChR subunits known to mediate synaptic transmission in the nervous system and the neuromuscular junction. Each nAchR subunit confers differential attributes to channel properties, including activation, deactivation and desensitization kinetics, pH sensitivity, cation permeability, and binding to allosteric modulators (PubMed:22361591, PubMed:27698419, PubMed:29720657, PubMed:38454578). CHRNA4 forms heteropentameric neuronal acetylcholine receptors with CHRNB2 and CHRNB4, as well as CHRNA5 and CHRNB3 as accesory subunits. Is the most abundant nAChR subtype expressed in the central nervous system (PubMed:16835356, PubMed:22361591, PubMed:27698419, PubMed:29720657, PubMed:38454578). Found in two major stoichiometric forms,(CHRNA4)3:(CHRNB2)2 and (CHRNA4)2:(CHRNB2)3, the two stoichiometric forms differ in their unitary conductance, calcium permeability, ACh sensitivity and potentiation by divalent cation (PubMed:27698419, PubMed:29720657, PubMed:38454578). Involved in the modulation of calcium-dependent signaling pathways, influences the release of neurotransmitters, including dopamine, glutamate and GABA (By similarity).</text>
</comment>
<comment type="catalytic activity">
    <reaction evidence="12 13">
        <text>Ca(2+)(in) = Ca(2+)(out)</text>
        <dbReference type="Rhea" id="RHEA:29671"/>
        <dbReference type="ChEBI" id="CHEBI:29108"/>
    </reaction>
</comment>
<comment type="catalytic activity">
    <reaction evidence="2">
        <text>K(+)(in) = K(+)(out)</text>
        <dbReference type="Rhea" id="RHEA:29463"/>
        <dbReference type="ChEBI" id="CHEBI:29103"/>
    </reaction>
</comment>
<comment type="catalytic activity">
    <reaction evidence="14 18">
        <text>Na(+)(in) = Na(+)(out)</text>
        <dbReference type="Rhea" id="RHEA:34963"/>
        <dbReference type="ChEBI" id="CHEBI:29101"/>
    </reaction>
</comment>
<comment type="activity regulation">
    <text evidence="4 8 11 12 13 16 17 18">Activated by a myriad of ligands such as acetylcholine, cytisine, nicotine, choline and epibatidine (PubMed:12527804, PubMed:16835356, PubMed:17132685, PubMed:20881005, PubMed:27698419, PubMed:29720657, PubMed:38454578). Channel potentiation by calcium is stoichiometry-selective, CHRNA4:CHRNB2 nACh receptor is achieved by calcium association with topographically distinct sites framed by anionic residues within the CHRNA4 subunit and between the CHRNA4 and CHRNB2 subunits (PubMed:38454578). nAChR activity is inhibited by the antagonist alpha-conotoxins BuIA, PnIA, GID and MII, small disulfide-constrained peptides from cone snails (By similarity).</text>
</comment>
<comment type="subunit">
    <text evidence="1 4 8 10 11 12 13 14 15 16 17 18">Neuronal AChR is composed of two different types of subunits: alpha and beta (PubMed:22361591). CHRNA4 forms heteropentameric neuronal acetylcholine receptors with CHRNB2 and CHRNB4, as well as CHRNA5 and CHRNB3 as accesory subunits (PubMed:20881005, PubMed:22361591, PubMed:27698419, PubMed:29720657, PubMed:38454578). Found in two major stoichiometric forms, LS (low agonist sensitivity): (CHRNA4)3:(CHRNB2)2 and HS (high agonist sensitivity): (CHRNA4)2:(CHRNB2)3, the two stoichiometric forms differ in their unitary conductance, calcium permeability, ACh sensitivity and potentiation by divalent cation (PubMed:12527804, PubMed:17132685, PubMed:22361591, PubMed:27698419, PubMed:29720657, PubMed:38454578). Cells produce predominantly an (CHRNA4)3:(CHRNB2)2 nAChR. The (CHRNA4)2:(CHRNB2)3 expression is selectively up-regulated by nicotine and has lower single channel conductance and calcium permeability (PubMed:17132685). In the striatum, also forms CHRNA4:CHRNA6:CHRNB2 complexes (By similarity). Also found in the stoichiometric form: (CHRNA4:CHRNB2)2:CHRNB3 (PubMed:16835356). Interacts with RIC3; which is required for proper folding and assembly (PubMed:16120769). Interacts with LYPD6 (PubMed:27344019).</text>
</comment>
<comment type="interaction">
    <interactant intactId="EBI-7132379">
        <id>P43681</id>
    </interactant>
    <interactant intactId="EBI-10173507">
        <id>Q6UY14-3</id>
        <label>ADAMTSL4</label>
    </interactant>
    <organismsDiffer>false</organismsDiffer>
    <experiments>3</experiments>
</comment>
<comment type="interaction">
    <interactant intactId="EBI-7132379">
        <id>P43681</id>
    </interactant>
    <interactant intactId="EBI-77613">
        <id>P05067</id>
        <label>APP</label>
    </interactant>
    <organismsDiffer>false</organismsDiffer>
    <experiments>3</experiments>
</comment>
<comment type="interaction">
    <interactant intactId="EBI-7132379">
        <id>P43681</id>
    </interactant>
    <interactant intactId="EBI-78129">
        <id>P83916</id>
        <label>CBX1</label>
    </interactant>
    <organismsDiffer>false</organismsDiffer>
    <experiments>3</experiments>
</comment>
<comment type="interaction">
    <interactant intactId="EBI-7132379">
        <id>P43681</id>
    </interactant>
    <interactant intactId="EBI-21348071">
        <id>Q6UXH1-1</id>
        <label>CRELD2</label>
    </interactant>
    <organismsDiffer>false</organismsDiffer>
    <experiments>3</experiments>
</comment>
<comment type="interaction">
    <interactant intactId="EBI-7132379">
        <id>P43681</id>
    </interactant>
    <interactant intactId="EBI-21348090">
        <id>Q6UXH1-3</id>
        <label>CRELD2</label>
    </interactant>
    <organismsDiffer>false</organismsDiffer>
    <experiments>3</experiments>
</comment>
<comment type="interaction">
    <interactant intactId="EBI-7132379">
        <id>P43681</id>
    </interactant>
    <interactant intactId="EBI-711977">
        <id>P20042</id>
        <label>EIF2S2</label>
    </interactant>
    <organismsDiffer>false</organismsDiffer>
    <experiments>3</experiments>
</comment>
<comment type="interaction">
    <interactant intactId="EBI-7132379">
        <id>P43681</id>
    </interactant>
    <interactant intactId="EBI-1642131">
        <id>Q9NZR2</id>
        <label>LRP1B</label>
    </interactant>
    <organismsDiffer>false</organismsDiffer>
    <experiments>3</experiments>
</comment>
<comment type="interaction">
    <interactant intactId="EBI-7132379">
        <id>P43681</id>
    </interactant>
    <interactant intactId="EBI-1171329">
        <id>Q92673</id>
        <label>SORL1</label>
    </interactant>
    <organismsDiffer>false</organismsDiffer>
    <experiments>3</experiments>
</comment>
<comment type="interaction">
    <interactant intactId="EBI-20716158">
        <id>P43681-1</id>
    </interactant>
    <interactant intactId="EBI-9008612">
        <id>P17787</id>
        <label>CHRNB2</label>
    </interactant>
    <organismsDiffer>false</organismsDiffer>
    <experiments>4</experiments>
</comment>
<comment type="subcellular location">
    <subcellularLocation>
        <location evidence="1">Synaptic cell membrane</location>
        <topology evidence="5">Multi-pass membrane protein</topology>
    </subcellularLocation>
    <subcellularLocation>
        <location evidence="1">Cell membrane</location>
        <topology evidence="5">Multi-pass membrane protein</topology>
    </subcellularLocation>
</comment>
<comment type="alternative products">
    <event type="alternative splicing"/>
    <isoform>
        <id>P43681-1</id>
        <name>1</name>
        <sequence type="displayed"/>
    </isoform>
    <isoform>
        <id>P43681-2</id>
        <name>2</name>
        <sequence type="described" ref="VSP_054275 VSP_054276"/>
    </isoform>
</comment>
<comment type="disease" evidence="7 9 19">
    <disease id="DI-00819">
        <name>Epilepsy, nocturnal frontal lobe, 1</name>
        <acronym>ENFL1</acronym>
        <description>An autosomal dominant focal epilepsy characterized by nocturnal seizures with hyperkinetic automatisms and poorly organized stereotyped movements.</description>
        <dbReference type="MIM" id="600513"/>
    </disease>
    <text>The disease is caused by variants affecting the gene represented in this entry.</text>
</comment>
<comment type="similarity">
    <text evidence="22">Belongs to the ligand-gated ion channel (TC 1.A.9) family. Acetylcholine receptor (TC 1.A.9.1) subfamily. Alpha-4/CHRNA4 sub-subfamily.</text>
</comment>
<reference key="1">
    <citation type="journal article" date="1995" name="Gene">
        <title>Cloning and transient expression of genes encoding the human alpha-4 and beta-2 neuronal nicotinic acetylcholine receptor (nAChR) subunits.</title>
        <authorList>
            <person name="Monteggia L.M."/>
            <person name="Gopalakrishnan M."/>
            <person name="Touma E."/>
            <person name="Idler K.B."/>
            <person name="Nash N."/>
            <person name="Arneric S.P."/>
            <person name="Sullivan J.P."/>
            <person name="Giordano T."/>
        </authorList>
    </citation>
    <scope>NUCLEOTIDE SEQUENCE [MRNA] (ISOFORM 1)</scope>
    <source>
        <tissue>Brain</tissue>
    </source>
</reference>
<reference key="2">
    <citation type="journal article" date="1996" name="Genomics">
        <title>Exon-intron structure of the human neuronal nicotinic acetylcholine receptor alpha 4 subunit (CHRNA4).</title>
        <authorList>
            <person name="Steinlein O.K."/>
            <person name="Weiland S."/>
            <person name="Stood J."/>
            <person name="Propping P."/>
        </authorList>
    </citation>
    <scope>NUCLEOTIDE SEQUENCE [GENOMIC DNA]</scope>
</reference>
<reference key="3">
    <citation type="journal article" date="1996" name="J. Mol. Neurosci.">
        <title>Comparative structure of human neuronal alpha 2-alpha 7 and beta 2-beta 4 nicotinic acetylcholine receptor subunits and functional expression of the alpha 2, alpha 3, alpha 4, alpha 7, beta 2, and beta 4 subunits.</title>
        <authorList>
            <person name="Elliott K.J."/>
            <person name="Ellis S.B."/>
            <person name="Berckhan K.J."/>
            <person name="Urrutia A."/>
            <person name="Chavez-Noriega L.E."/>
            <person name="Johnson E.C."/>
            <person name="Velicelebi G."/>
            <person name="Harpold M.M."/>
        </authorList>
    </citation>
    <scope>NUCLEOTIDE SEQUENCE [MRNA] (ISOFORM 1)</scope>
    <source>
        <tissue>Hippocampus</tissue>
    </source>
</reference>
<reference key="4">
    <citation type="journal article" date="1997" name="FEBS Lett.">
        <title>Cloning and sequence of full-length cDNAs encoding the human neuronal nicotinic acetylcholine receptor (nAChR) subunits beta3 and beta4 and expression of seven nAChR subunits in the human neuroblastoma cell line SH-SY5Y and/or IMR-32.</title>
        <authorList>
            <person name="Groot Kormelink P.J."/>
            <person name="Luyten W.H.M.L."/>
        </authorList>
    </citation>
    <scope>NUCLEOTIDE SEQUENCE [MRNA] (ISOFORM 1)</scope>
</reference>
<reference key="5">
    <citation type="submission" date="2005-06" db="EMBL/GenBank/DDBJ databases">
        <authorList>
            <consortium name="NIEHS SNPs program"/>
        </authorList>
    </citation>
    <scope>NUCLEOTIDE SEQUENCE [GENOMIC DNA]</scope>
    <scope>VARIANTS GLY-387 AND LEU-517</scope>
</reference>
<reference key="6">
    <citation type="journal article" date="2001" name="Nature">
        <title>The DNA sequence and comparative analysis of human chromosome 20.</title>
        <authorList>
            <person name="Deloukas P."/>
            <person name="Matthews L.H."/>
            <person name="Ashurst J.L."/>
            <person name="Burton J."/>
            <person name="Gilbert J.G.R."/>
            <person name="Jones M."/>
            <person name="Stavrides G."/>
            <person name="Almeida J.P."/>
            <person name="Babbage A.K."/>
            <person name="Bagguley C.L."/>
            <person name="Bailey J."/>
            <person name="Barlow K.F."/>
            <person name="Bates K.N."/>
            <person name="Beard L.M."/>
            <person name="Beare D.M."/>
            <person name="Beasley O.P."/>
            <person name="Bird C.P."/>
            <person name="Blakey S.E."/>
            <person name="Bridgeman A.M."/>
            <person name="Brown A.J."/>
            <person name="Buck D."/>
            <person name="Burrill W.D."/>
            <person name="Butler A.P."/>
            <person name="Carder C."/>
            <person name="Carter N.P."/>
            <person name="Chapman J.C."/>
            <person name="Clamp M."/>
            <person name="Clark G."/>
            <person name="Clark L.N."/>
            <person name="Clark S.Y."/>
            <person name="Clee C.M."/>
            <person name="Clegg S."/>
            <person name="Cobley V.E."/>
            <person name="Collier R.E."/>
            <person name="Connor R.E."/>
            <person name="Corby N.R."/>
            <person name="Coulson A."/>
            <person name="Coville G.J."/>
            <person name="Deadman R."/>
            <person name="Dhami P.D."/>
            <person name="Dunn M."/>
            <person name="Ellington A.G."/>
            <person name="Frankland J.A."/>
            <person name="Fraser A."/>
            <person name="French L."/>
            <person name="Garner P."/>
            <person name="Grafham D.V."/>
            <person name="Griffiths C."/>
            <person name="Griffiths M.N.D."/>
            <person name="Gwilliam R."/>
            <person name="Hall R.E."/>
            <person name="Hammond S."/>
            <person name="Harley J.L."/>
            <person name="Heath P.D."/>
            <person name="Ho S."/>
            <person name="Holden J.L."/>
            <person name="Howden P.J."/>
            <person name="Huckle E."/>
            <person name="Hunt A.R."/>
            <person name="Hunt S.E."/>
            <person name="Jekosch K."/>
            <person name="Johnson C.M."/>
            <person name="Johnson D."/>
            <person name="Kay M.P."/>
            <person name="Kimberley A.M."/>
            <person name="King A."/>
            <person name="Knights A."/>
            <person name="Laird G.K."/>
            <person name="Lawlor S."/>
            <person name="Lehvaeslaiho M.H."/>
            <person name="Leversha M.A."/>
            <person name="Lloyd C."/>
            <person name="Lloyd D.M."/>
            <person name="Lovell J.D."/>
            <person name="Marsh V.L."/>
            <person name="Martin S.L."/>
            <person name="McConnachie L.J."/>
            <person name="McLay K."/>
            <person name="McMurray A.A."/>
            <person name="Milne S.A."/>
            <person name="Mistry D."/>
            <person name="Moore M.J.F."/>
            <person name="Mullikin J.C."/>
            <person name="Nickerson T."/>
            <person name="Oliver K."/>
            <person name="Parker A."/>
            <person name="Patel R."/>
            <person name="Pearce T.A.V."/>
            <person name="Peck A.I."/>
            <person name="Phillimore B.J.C.T."/>
            <person name="Prathalingam S.R."/>
            <person name="Plumb R.W."/>
            <person name="Ramsay H."/>
            <person name="Rice C.M."/>
            <person name="Ross M.T."/>
            <person name="Scott C.E."/>
            <person name="Sehra H.K."/>
            <person name="Shownkeen R."/>
            <person name="Sims S."/>
            <person name="Skuce C.D."/>
            <person name="Smith M.L."/>
            <person name="Soderlund C."/>
            <person name="Steward C.A."/>
            <person name="Sulston J.E."/>
            <person name="Swann R.M."/>
            <person name="Sycamore N."/>
            <person name="Taylor R."/>
            <person name="Tee L."/>
            <person name="Thomas D.W."/>
            <person name="Thorpe A."/>
            <person name="Tracey A."/>
            <person name="Tromans A.C."/>
            <person name="Vaudin M."/>
            <person name="Wall M."/>
            <person name="Wallis J.M."/>
            <person name="Whitehead S.L."/>
            <person name="Whittaker P."/>
            <person name="Willey D.L."/>
            <person name="Williams L."/>
            <person name="Williams S.A."/>
            <person name="Wilming L."/>
            <person name="Wray P.W."/>
            <person name="Hubbard T."/>
            <person name="Durbin R.M."/>
            <person name="Bentley D.R."/>
            <person name="Beck S."/>
            <person name="Rogers J."/>
        </authorList>
    </citation>
    <scope>NUCLEOTIDE SEQUENCE [LARGE SCALE GENOMIC DNA]</scope>
</reference>
<reference key="7">
    <citation type="journal article" date="2004" name="Genome Res.">
        <title>The status, quality, and expansion of the NIH full-length cDNA project: the Mammalian Gene Collection (MGC).</title>
        <authorList>
            <consortium name="The MGC Project Team"/>
        </authorList>
    </citation>
    <scope>NUCLEOTIDE SEQUENCE [LARGE SCALE MRNA] (ISOFORMS 1 AND 2)</scope>
</reference>
<reference key="8">
    <citation type="submission" date="1995-05" db="EMBL/GenBank/DDBJ databases">
        <title>Molecular cloning of human neuronal nicotinic acetylcholine receptor 4-like subunit.</title>
        <authorList>
            <person name="Mamalaki A."/>
            <person name="Remoundos M."/>
            <person name="Tzartos S."/>
        </authorList>
    </citation>
    <scope>NUCLEOTIDE SEQUENCE [MRNA] OF 26-627 (ISOFORM 1)</scope>
    <source>
        <tissue>Brain</tissue>
    </source>
</reference>
<reference key="9">
    <citation type="journal article" date="2003" name="Mol. Pharmacol.">
        <title>Alternate stoichiometries of alpha4beta2 nicotinic acetylcholine receptors.</title>
        <authorList>
            <person name="Nelson M.E."/>
            <person name="Kuryatov A."/>
            <person name="Choi C.H."/>
            <person name="Zhou Y."/>
            <person name="Lindstrom J."/>
        </authorList>
    </citation>
    <scope>FUNCTION</scope>
    <scope>SUBUNIT</scope>
    <scope>ACTIVITY REGULATION</scope>
    <scope>STOICHIOMETRY</scope>
</reference>
<reference key="10">
    <citation type="journal article" date="2005" name="Mol. Pharmacol.">
        <title>RIC-3 enhances functional expression of multiple nicotinic acetylcholine receptor subtypes in mammalian cells.</title>
        <authorList>
            <person name="Lansdell S.J."/>
            <person name="Gee V.J."/>
            <person name="Harkness P.C."/>
            <person name="Doward A.I."/>
            <person name="Baker E.R."/>
            <person name="Gibb A.J."/>
            <person name="Millar N.S."/>
        </authorList>
    </citation>
    <scope>INTERACTION WITH RIC3</scope>
</reference>
<reference key="11">
    <citation type="journal article" date="2006" name="Mol. Pharmacol.">
        <title>Beta3 subunits promote expression and nicotine-induced up-regulation of human nicotinic alpha6* nicotinic acetylcholine receptors expressed in transfected cell lines.</title>
        <authorList>
            <person name="Tumkosit P."/>
            <person name="Kuryatov A."/>
            <person name="Luo J."/>
            <person name="Lindstrom J."/>
        </authorList>
    </citation>
    <scope>FUNCTION</scope>
    <scope>SUBUNIT</scope>
    <scope>ACTIVITY REGULATION</scope>
</reference>
<reference key="12">
    <citation type="journal article" date="2007" name="Mol. Pharmacol.">
        <title>Ca2+ permeability of the (alpha4)3(beta2)2 stoichiometry greatly exceeds that of (alpha4)2(beta2)3 human acetylcholine receptors.</title>
        <authorList>
            <person name="Tapia L."/>
            <person name="Kuryatov A."/>
            <person name="Lindstrom J."/>
        </authorList>
    </citation>
    <scope>FUNCTION</scope>
    <scope>SUBUNIT</scope>
    <scope>ACTIVITY REGULATION</scope>
    <scope>STOICHIOMETRY</scope>
    <scope>CATALYTIC ACTIVITY</scope>
    <scope>MUTAGENESIS OF GLU-294</scope>
</reference>
<reference key="13">
    <citation type="journal article" date="2011" name="Mol. Pharmacol.">
        <title>Acetylcholine receptor (AChR) alpha5 subunit variant associated with risk for nicotine dependence and lung cancer reduces (alpha4beta2)(2)alpha5 AChR function.</title>
        <authorList>
            <person name="Kuryatov A."/>
            <person name="Berrettini W."/>
            <person name="Lindstrom J."/>
        </authorList>
    </citation>
    <scope>FUNCTION</scope>
    <scope>CATALYTIC ACTIVITY</scope>
    <scope>SUBUNIT</scope>
    <scope>ACTIVITY REGULATION</scope>
</reference>
<reference key="14">
    <citation type="journal article" date="2016" name="J. Neurochem.">
        <title>Functional interaction between Lypd6 and nicotinic acetylcholine receptors.</title>
        <authorList>
            <person name="Arvaniti M."/>
            <person name="Jensen M.M."/>
            <person name="Soni N."/>
            <person name="Wang H."/>
            <person name="Klein A.B."/>
            <person name="Thiriet N."/>
            <person name="Pinborg L.H."/>
            <person name="Muldoon P.P."/>
            <person name="Wienecke J."/>
            <person name="Imad Damaj M."/>
            <person name="Kohlmeier K.A."/>
            <person name="Gondre-Lewis M.C."/>
            <person name="Mikkelsen J.D."/>
            <person name="Thomsen M.S."/>
        </authorList>
    </citation>
    <scope>INTERACTION WITH LYPD6</scope>
</reference>
<reference evidence="24" key="15">
    <citation type="journal article" date="2012" name="Biochim. Biophys. Acta">
        <title>NMR structures of the transmembrane domains of the alpha4beta2 nAChR.</title>
        <authorList>
            <person name="Bondarenko V."/>
            <person name="Mowrey D."/>
            <person name="Tillman T."/>
            <person name="Cui T."/>
            <person name="Liu L.T."/>
            <person name="Xu Y."/>
            <person name="Tang P."/>
        </authorList>
    </citation>
    <scope>STRUCTURE BY NMR OF 242-625</scope>
    <scope>SUBUNIT</scope>
    <scope>FUNCTION</scope>
    <scope>CATALYTIC ACTIVITY</scope>
</reference>
<reference evidence="25" key="16">
    <citation type="journal article" date="2016" name="Nature">
        <title>X-ray structure of the human alpha4beta2 nicotinic receptor.</title>
        <authorList>
            <person name="Morales-Perez C.L."/>
            <person name="Noviello C.M."/>
            <person name="Hibbs R.E."/>
        </authorList>
    </citation>
    <scope>X-RAY CRYSTALLOGRAPHY (3.94 ANGSTROMS) OF 27-364 AND 586-627 IN COMPLEX WITH CHRNB2</scope>
    <scope>GLYCOSYLATION AT ASN-174</scope>
    <scope>DISULFIDE BONDS</scope>
    <scope>SUBUNIT</scope>
    <scope>FUNCTION</scope>
    <scope>ACTIVITY REGULATION</scope>
</reference>
<reference evidence="26 27" key="17">
    <citation type="journal article" date="2018" name="Nature">
        <title>Structural principles of distinct assemblies of the human alpha4beta2 nicotinic receptor.</title>
        <authorList>
            <person name="Walsh R.M."/>
            <person name="Roh S.H."/>
            <person name="Gharpure A."/>
            <person name="Morales-Perez C.L."/>
            <person name="Teng J."/>
            <person name="Hibbs R.E."/>
        </authorList>
    </citation>
    <scope>STRUCTURE BY ELECTRON MICROSCOPY (3.40 ANGSTROMS) OF 27-364 AND 586-627 IN COMPLEX WITH CHRNB2</scope>
    <scope>DISULFIDE BONDS</scope>
    <scope>SUBUNIT</scope>
    <scope>FUNCTION</scope>
    <scope>ACTIVITY REGULATION</scope>
</reference>
<reference evidence="30 31 32 33 34 35" key="18">
    <citation type="journal article" date="2024" name="Br. J. Pharmacol.">
        <title>Structural bases for stoichiometry-selective calcium potentiation of a neuronal nicotinic receptor.</title>
        <authorList>
            <person name="Mazzaferro S."/>
            <person name="Kang G."/>
            <person name="Natarajan K."/>
            <person name="Hibbs R.E."/>
            <person name="Sine S.M."/>
        </authorList>
    </citation>
    <scope>STRUCTURE BY ELECTRON MICROSCOPY (2.35 ANGSTROMS) OF 27-627 IN COMPLEX WITH CHRNB2</scope>
    <scope>DISULFIDE BONDS</scope>
    <scope>MUTAGENESIS OF ASP-75; GLU-78; GLU-205; GLU-208 AND GLU-224</scope>
    <scope>FUNCTION</scope>
    <scope>CATALYTIC ACTIVITY</scope>
    <scope>ACTIVITY REGULATION</scope>
</reference>
<reference key="19">
    <citation type="journal article" date="1995" name="Nat. Genet.">
        <title>A missense mutation in the neuronal nicotinic acetylcholine receptor alpha-4 subunit is associated with autosomal dominant nocturnal frontal lobe epilepsy.</title>
        <authorList>
            <person name="Steinlein O.K."/>
            <person name="Mulley J.C."/>
            <person name="Propping P."/>
            <person name="Wallace R.H."/>
            <person name="Phillips H.A."/>
            <person name="Sutherland G.R."/>
            <person name="Scheffer I.E."/>
            <person name="Berkovic S.F."/>
        </authorList>
    </citation>
    <scope>VARIANT ENFL1 PHE-280</scope>
</reference>
<reference key="20">
    <citation type="journal article" date="1999" name="Neurology">
        <title>A novel mutation of CHRNA4 responsible for autosomal dominant nocturnal frontal lobe epilepsy.</title>
        <authorList>
            <person name="Hirose S."/>
            <person name="Iwata H."/>
            <person name="Akiyoshi H."/>
            <person name="Kobayashi K."/>
            <person name="Ito M."/>
            <person name="Wada K."/>
            <person name="Kaneko S."/>
            <person name="Mitsudome A."/>
        </authorList>
    </citation>
    <scope>VARIANT ENFL1 LEU-280</scope>
</reference>
<reference key="21">
    <citation type="journal article" date="2003" name="Arch. Neurol.">
        <title>A Korean kindred with autosomal dominant nocturnal frontal lobe epilepsy and mental retardation.</title>
        <authorList>
            <person name="Cho Y.-W."/>
            <person name="Motamedi G.K."/>
            <person name="Laufenberg I."/>
            <person name="Sohn S.-I."/>
            <person name="Lim J.-G."/>
            <person name="Lee H."/>
            <person name="Yi S.-D."/>
            <person name="Lee J.-H."/>
            <person name="Kim D.-K."/>
            <person name="Reba R."/>
            <person name="Gaillard W.D."/>
            <person name="Theodore W.H."/>
            <person name="Lesser R.P."/>
            <person name="Steinlein O.K."/>
        </authorList>
    </citation>
    <scope>VARIANT ENFL1 LEU-280</scope>
</reference>
<feature type="signal peptide" evidence="5">
    <location>
        <begin position="1"/>
        <end position="26"/>
    </location>
</feature>
<feature type="chain" id="PRO_0000000351" description="Neuronal acetylcholine receptor subunit alpha-4">
    <location>
        <begin position="27"/>
        <end position="627"/>
    </location>
</feature>
<feature type="topological domain" description="Extracellular" evidence="17 26">
    <location>
        <begin position="27"/>
        <end position="249"/>
    </location>
</feature>
<feature type="transmembrane region" description="Helical" evidence="17 26">
    <location>
        <begin position="250"/>
        <end position="269"/>
    </location>
</feature>
<feature type="transmembrane region" description="Helical" evidence="17 26">
    <location>
        <begin position="275"/>
        <end position="291"/>
    </location>
</feature>
<feature type="transmembrane region" description="Helical" evidence="17 26">
    <location>
        <begin position="306"/>
        <end position="330"/>
    </location>
</feature>
<feature type="topological domain" description="Cytoplasmic" evidence="5">
    <location>
        <begin position="331"/>
        <end position="600"/>
    </location>
</feature>
<feature type="transmembrane region" description="Helical" evidence="5">
    <location>
        <begin position="601"/>
        <end position="619"/>
    </location>
</feature>
<feature type="region of interest" description="Disordered" evidence="6">
    <location>
        <begin position="382"/>
        <end position="481"/>
    </location>
</feature>
<feature type="region of interest" description="Disordered" evidence="6">
    <location>
        <begin position="496"/>
        <end position="561"/>
    </location>
</feature>
<feature type="compositionally biased region" description="Low complexity" evidence="6">
    <location>
        <begin position="501"/>
        <end position="511"/>
    </location>
</feature>
<feature type="compositionally biased region" description="Polar residues" evidence="6">
    <location>
        <begin position="538"/>
        <end position="548"/>
    </location>
</feature>
<feature type="binding site" evidence="18 31 32 34">
    <location>
        <position position="76"/>
    </location>
    <ligand>
        <name>Ca(2+)</name>
        <dbReference type="ChEBI" id="CHEBI:29108"/>
    </ligand>
</feature>
<feature type="binding site" evidence="18 31 34">
    <location>
        <position position="78"/>
    </location>
    <ligand>
        <name>Ca(2+)</name>
        <dbReference type="ChEBI" id="CHEBI:29108"/>
    </ligand>
</feature>
<feature type="modified residue" description="Phosphoserine" evidence="4">
    <location>
        <position position="424"/>
    </location>
</feature>
<feature type="modified residue" description="Phosphoserine" evidence="1">
    <location>
        <position position="538"/>
    </location>
</feature>
<feature type="modified residue" description="Phosphoserine" evidence="1">
    <location>
        <position position="541"/>
    </location>
</feature>
<feature type="lipid moiety-binding region" description="S-palmitoyl cysteine" evidence="3">
    <location>
        <position position="271"/>
    </location>
</feature>
<feature type="glycosylation site" description="N-linked (GlcNAc...) asparagine" evidence="5">
    <location>
        <position position="57"/>
    </location>
</feature>
<feature type="glycosylation site" description="N-linked (GlcNAc...) asparagine" evidence="5">
    <location>
        <position position="107"/>
    </location>
</feature>
<feature type="glycosylation site" description="N-linked (GlcNAc...) asparagine" evidence="16 25">
    <location>
        <position position="174"/>
    </location>
</feature>
<feature type="disulfide bond" evidence="16 17 18 25 26 27 28 29 30 31 32 33 34 35">
    <location>
        <begin position="161"/>
        <end position="175"/>
    </location>
</feature>
<feature type="disulfide bond" description="Associated with receptor activation" evidence="16 17 18 25 26 27 28 29 30 31 32 33 34 35">
    <location>
        <begin position="225"/>
        <end position="226"/>
    </location>
</feature>
<feature type="splice variant" id="VSP_054275" description="In isoform 2." evidence="21">
    <original>MELGGPGAPRLLPPLLLLLGTGLLRASSHVETRAHAEERLLKKLFSGYNKWSRPVAN</original>
    <variation>MRMSPPSASPPSSSGGRTSSSTTTAGEPFWAGVLFAIRPHPGLSGRIVWTAGCPGEG</variation>
    <location>
        <begin position="1"/>
        <end position="57"/>
    </location>
</feature>
<feature type="splice variant" id="VSP_054276" description="In isoform 2." evidence="21">
    <location>
        <begin position="58"/>
        <end position="128"/>
    </location>
</feature>
<feature type="sequence variant" id="VAR_000295" description="In ENFL1; dbSNP:rs121909580." evidence="19">
    <original>S</original>
    <variation>F</variation>
    <location>
        <position position="280"/>
    </location>
</feature>
<feature type="sequence variant" id="VAR_017531" description="In ENFL1." evidence="7 9">
    <original>S</original>
    <variation>L</variation>
    <location>
        <position position="280"/>
    </location>
</feature>
<feature type="sequence variant" id="VAR_023402" description="In dbSNP:rs45604738." evidence="20">
    <original>E</original>
    <variation>G</variation>
    <location>
        <position position="387"/>
    </location>
</feature>
<feature type="sequence variant" id="VAR_023403" description="In dbSNP:rs45622132." evidence="20">
    <original>S</original>
    <variation>L</variation>
    <location>
        <position position="517"/>
    </location>
</feature>
<feature type="mutagenesis site" description="Loss of CHRNA4:CHRNB2 channel opening potentiation by divalent cations." evidence="18">
    <original>D</original>
    <variation>A</variation>
    <location>
        <position position="75"/>
    </location>
</feature>
<feature type="mutagenesis site" description="Loss of CHRNA4:CHRNB2 channel opening potentiation by divalent cations." evidence="18">
    <original>E</original>
    <variation>A</variation>
    <location>
        <position position="78"/>
    </location>
</feature>
<feature type="mutagenesis site" description="Loss of CHRNA4:CHRNB2 channel opening potentiation by divalent cations." evidence="18">
    <original>E</original>
    <variation>A</variation>
    <location>
        <position position="205"/>
    </location>
</feature>
<feature type="mutagenesis site" description="Loss of CHRNA4:CHRNB2 channel opening potentiation by divalent cations." evidence="18">
    <original>E</original>
    <variation>A</variation>
    <location>
        <position position="208"/>
    </location>
</feature>
<feature type="mutagenesis site" description="Loss of CHRNA4:CHRNB2 channel opening potentiation by divalent cations." evidence="18">
    <original>E</original>
    <variation>A</variation>
    <location>
        <position position="224"/>
    </location>
</feature>
<feature type="mutagenesis site" description="Loss of CA(2+) permeability." evidence="12">
    <original>E</original>
    <variation>K</variation>
    <location>
        <position position="294"/>
    </location>
</feature>
<feature type="sequence conflict" description="In Ref. 7; AAH96290." evidence="22" ref="7">
    <original>G</original>
    <variation>E</variation>
    <location>
        <position position="4"/>
    </location>
</feature>
<feature type="helix" evidence="38">
    <location>
        <begin position="33"/>
        <end position="44"/>
    </location>
</feature>
<feature type="strand" evidence="38">
    <location>
        <begin position="62"/>
        <end position="77"/>
    </location>
</feature>
<feature type="turn" evidence="38">
    <location>
        <begin position="78"/>
        <end position="81"/>
    </location>
</feature>
<feature type="strand" evidence="38">
    <location>
        <begin position="82"/>
        <end position="99"/>
    </location>
</feature>
<feature type="helix" evidence="38">
    <location>
        <begin position="102"/>
        <end position="105"/>
    </location>
</feature>
<feature type="strand" evidence="38">
    <location>
        <begin position="110"/>
        <end position="114"/>
    </location>
</feature>
<feature type="helix" evidence="38">
    <location>
        <begin position="115"/>
        <end position="117"/>
    </location>
</feature>
<feature type="strand" evidence="38">
    <location>
        <begin position="123"/>
        <end position="125"/>
    </location>
</feature>
<feature type="strand" evidence="37">
    <location>
        <begin position="128"/>
        <end position="131"/>
    </location>
</feature>
<feature type="strand" evidence="38">
    <location>
        <begin position="140"/>
        <end position="144"/>
    </location>
</feature>
<feature type="strand" evidence="38">
    <location>
        <begin position="146"/>
        <end position="151"/>
    </location>
</feature>
<feature type="strand" evidence="38">
    <location>
        <begin position="154"/>
        <end position="160"/>
    </location>
</feature>
<feature type="turn" evidence="38">
    <location>
        <begin position="166"/>
        <end position="169"/>
    </location>
</feature>
<feature type="strand" evidence="38">
    <location>
        <begin position="172"/>
        <end position="183"/>
    </location>
</feature>
<feature type="turn" evidence="38">
    <location>
        <begin position="186"/>
        <end position="188"/>
    </location>
</feature>
<feature type="strand" evidence="38">
    <location>
        <begin position="189"/>
        <end position="194"/>
    </location>
</feature>
<feature type="strand" evidence="38">
    <location>
        <begin position="207"/>
        <end position="222"/>
    </location>
</feature>
<feature type="strand" evidence="38">
    <location>
        <begin position="227"/>
        <end position="241"/>
    </location>
</feature>
<feature type="helix" evidence="38">
    <location>
        <begin position="244"/>
        <end position="249"/>
    </location>
</feature>
<feature type="helix" evidence="38">
    <location>
        <begin position="251"/>
        <end position="258"/>
    </location>
</feature>
<feature type="turn" evidence="37">
    <location>
        <begin position="259"/>
        <end position="262"/>
    </location>
</feature>
<feature type="helix" evidence="38">
    <location>
        <begin position="263"/>
        <end position="266"/>
    </location>
</feature>
<feature type="helix" evidence="38">
    <location>
        <begin position="269"/>
        <end position="271"/>
    </location>
</feature>
<feature type="helix" evidence="38">
    <location>
        <begin position="274"/>
        <end position="293"/>
    </location>
</feature>
<feature type="strand" evidence="36">
    <location>
        <begin position="300"/>
        <end position="302"/>
    </location>
</feature>
<feature type="helix" evidence="38">
    <location>
        <begin position="305"/>
        <end position="331"/>
    </location>
</feature>
<feature type="turn" evidence="38">
    <location>
        <begin position="335"/>
        <end position="337"/>
    </location>
</feature>
<feature type="helix" evidence="38">
    <location>
        <begin position="342"/>
        <end position="355"/>
    </location>
</feature>
<feature type="helix" evidence="38">
    <location>
        <begin position="585"/>
        <end position="622"/>
    </location>
</feature>
<accession>P43681</accession>
<accession>Q4JGR7</accession>
<accession>Q4VAQ5</accession>
<accession>Q4VAQ6</accession>